<name>RL2_FLAJ1</name>
<sequence>MSVRKLKPITPGQRFRVVNGYDAITTDKPERSLIAPIKNSGGRNSQGKMTMRYTGGGHKQRYRIIDFKRTKDGIPATVKSIEYDPNRTAFIALLAYADGEKTYIIAQNGLKVGQKLVSGPESQPEIGNTLPLSRIPLGTVISCIELRPGQGAVIARSAGTFAQLMARDGKYATIKMPSGETRLILLTCSATIGAVSNSDHQLVVSGKAGRTRWLGRRPRTRPVAMNPVDHPMGGGEGRSSGGHPRSRNGLPAKGYRTRSKKNPSNKYIVERRKK</sequence>
<keyword id="KW-0687">Ribonucleoprotein</keyword>
<keyword id="KW-0689">Ribosomal protein</keyword>
<keyword id="KW-0694">RNA-binding</keyword>
<keyword id="KW-0699">rRNA-binding</keyword>
<organism>
    <name type="scientific">Flavobacterium johnsoniae (strain ATCC 17061 / DSM 2064 / JCM 8514 / BCRC 14874 / CCUG 350202 / NBRC 14942 / NCIMB 11054 / UW101)</name>
    <name type="common">Cytophaga johnsonae</name>
    <dbReference type="NCBI Taxonomy" id="376686"/>
    <lineage>
        <taxon>Bacteria</taxon>
        <taxon>Pseudomonadati</taxon>
        <taxon>Bacteroidota</taxon>
        <taxon>Flavobacteriia</taxon>
        <taxon>Flavobacteriales</taxon>
        <taxon>Flavobacteriaceae</taxon>
        <taxon>Flavobacterium</taxon>
    </lineage>
</organism>
<gene>
    <name evidence="1" type="primary">rplB</name>
    <name type="ordered locus">Fjoh_0394</name>
</gene>
<dbReference type="EMBL" id="CP000685">
    <property type="protein sequence ID" value="ABQ03430.1"/>
    <property type="molecule type" value="Genomic_DNA"/>
</dbReference>
<dbReference type="RefSeq" id="WP_008464287.1">
    <property type="nucleotide sequence ID" value="NZ_MUGZ01000005.1"/>
</dbReference>
<dbReference type="SMR" id="A5FMZ7"/>
<dbReference type="STRING" id="376686.Fjoh_0394"/>
<dbReference type="KEGG" id="fjo:Fjoh_0394"/>
<dbReference type="eggNOG" id="COG0090">
    <property type="taxonomic scope" value="Bacteria"/>
</dbReference>
<dbReference type="HOGENOM" id="CLU_036235_2_1_10"/>
<dbReference type="OrthoDB" id="9778722at2"/>
<dbReference type="Proteomes" id="UP000006694">
    <property type="component" value="Chromosome"/>
</dbReference>
<dbReference type="GO" id="GO:0015934">
    <property type="term" value="C:large ribosomal subunit"/>
    <property type="evidence" value="ECO:0007669"/>
    <property type="project" value="InterPro"/>
</dbReference>
<dbReference type="GO" id="GO:0019843">
    <property type="term" value="F:rRNA binding"/>
    <property type="evidence" value="ECO:0007669"/>
    <property type="project" value="UniProtKB-UniRule"/>
</dbReference>
<dbReference type="GO" id="GO:0003735">
    <property type="term" value="F:structural constituent of ribosome"/>
    <property type="evidence" value="ECO:0007669"/>
    <property type="project" value="InterPro"/>
</dbReference>
<dbReference type="GO" id="GO:0016740">
    <property type="term" value="F:transferase activity"/>
    <property type="evidence" value="ECO:0007669"/>
    <property type="project" value="InterPro"/>
</dbReference>
<dbReference type="GO" id="GO:0002181">
    <property type="term" value="P:cytoplasmic translation"/>
    <property type="evidence" value="ECO:0007669"/>
    <property type="project" value="TreeGrafter"/>
</dbReference>
<dbReference type="FunFam" id="2.30.30.30:FF:000001">
    <property type="entry name" value="50S ribosomal protein L2"/>
    <property type="match status" value="1"/>
</dbReference>
<dbReference type="FunFam" id="2.40.50.140:FF:000003">
    <property type="entry name" value="50S ribosomal protein L2"/>
    <property type="match status" value="1"/>
</dbReference>
<dbReference type="FunFam" id="4.10.950.10:FF:000001">
    <property type="entry name" value="50S ribosomal protein L2"/>
    <property type="match status" value="1"/>
</dbReference>
<dbReference type="Gene3D" id="2.30.30.30">
    <property type="match status" value="1"/>
</dbReference>
<dbReference type="Gene3D" id="2.40.50.140">
    <property type="entry name" value="Nucleic acid-binding proteins"/>
    <property type="match status" value="1"/>
</dbReference>
<dbReference type="Gene3D" id="4.10.950.10">
    <property type="entry name" value="Ribosomal protein L2, domain 3"/>
    <property type="match status" value="1"/>
</dbReference>
<dbReference type="HAMAP" id="MF_01320_B">
    <property type="entry name" value="Ribosomal_uL2_B"/>
    <property type="match status" value="1"/>
</dbReference>
<dbReference type="InterPro" id="IPR012340">
    <property type="entry name" value="NA-bd_OB-fold"/>
</dbReference>
<dbReference type="InterPro" id="IPR014722">
    <property type="entry name" value="Rib_uL2_dom2"/>
</dbReference>
<dbReference type="InterPro" id="IPR002171">
    <property type="entry name" value="Ribosomal_uL2"/>
</dbReference>
<dbReference type="InterPro" id="IPR005880">
    <property type="entry name" value="Ribosomal_uL2_bac/org-type"/>
</dbReference>
<dbReference type="InterPro" id="IPR022669">
    <property type="entry name" value="Ribosomal_uL2_C"/>
</dbReference>
<dbReference type="InterPro" id="IPR014726">
    <property type="entry name" value="Ribosomal_uL2_dom3"/>
</dbReference>
<dbReference type="InterPro" id="IPR022666">
    <property type="entry name" value="Ribosomal_uL2_RNA-bd_dom"/>
</dbReference>
<dbReference type="InterPro" id="IPR008991">
    <property type="entry name" value="Translation_prot_SH3-like_sf"/>
</dbReference>
<dbReference type="NCBIfam" id="TIGR01171">
    <property type="entry name" value="rplB_bact"/>
    <property type="match status" value="1"/>
</dbReference>
<dbReference type="PANTHER" id="PTHR13691:SF5">
    <property type="entry name" value="LARGE RIBOSOMAL SUBUNIT PROTEIN UL2M"/>
    <property type="match status" value="1"/>
</dbReference>
<dbReference type="PANTHER" id="PTHR13691">
    <property type="entry name" value="RIBOSOMAL PROTEIN L2"/>
    <property type="match status" value="1"/>
</dbReference>
<dbReference type="Pfam" id="PF00181">
    <property type="entry name" value="Ribosomal_L2"/>
    <property type="match status" value="1"/>
</dbReference>
<dbReference type="Pfam" id="PF03947">
    <property type="entry name" value="Ribosomal_L2_C"/>
    <property type="match status" value="1"/>
</dbReference>
<dbReference type="PIRSF" id="PIRSF002158">
    <property type="entry name" value="Ribosomal_L2"/>
    <property type="match status" value="1"/>
</dbReference>
<dbReference type="SMART" id="SM01383">
    <property type="entry name" value="Ribosomal_L2"/>
    <property type="match status" value="1"/>
</dbReference>
<dbReference type="SMART" id="SM01382">
    <property type="entry name" value="Ribosomal_L2_C"/>
    <property type="match status" value="1"/>
</dbReference>
<dbReference type="SUPFAM" id="SSF50249">
    <property type="entry name" value="Nucleic acid-binding proteins"/>
    <property type="match status" value="1"/>
</dbReference>
<dbReference type="SUPFAM" id="SSF50104">
    <property type="entry name" value="Translation proteins SH3-like domain"/>
    <property type="match status" value="1"/>
</dbReference>
<reference key="1">
    <citation type="journal article" date="2009" name="Appl. Environ. Microbiol.">
        <title>Novel features of the polysaccharide-digesting gliding bacterium Flavobacterium johnsoniae as revealed by genome sequence analysis.</title>
        <authorList>
            <person name="McBride M.J."/>
            <person name="Xie G."/>
            <person name="Martens E.C."/>
            <person name="Lapidus A."/>
            <person name="Henrissat B."/>
            <person name="Rhodes R.G."/>
            <person name="Goltsman E."/>
            <person name="Wang W."/>
            <person name="Xu J."/>
            <person name="Hunnicutt D.W."/>
            <person name="Staroscik A.M."/>
            <person name="Hoover T.R."/>
            <person name="Cheng Y.Q."/>
            <person name="Stein J.L."/>
        </authorList>
    </citation>
    <scope>NUCLEOTIDE SEQUENCE [LARGE SCALE GENOMIC DNA]</scope>
    <source>
        <strain>ATCC 17061 / DSM 2064 / JCM 8514 / BCRC 14874 / CCUG 350202 / NBRC 14942 / NCIMB 11054 / UW101</strain>
    </source>
</reference>
<feature type="chain" id="PRO_1000086330" description="Large ribosomal subunit protein uL2">
    <location>
        <begin position="1"/>
        <end position="274"/>
    </location>
</feature>
<feature type="region of interest" description="Disordered" evidence="2">
    <location>
        <begin position="214"/>
        <end position="274"/>
    </location>
</feature>
<protein>
    <recommendedName>
        <fullName evidence="1">Large ribosomal subunit protein uL2</fullName>
    </recommendedName>
    <alternativeName>
        <fullName evidence="3">50S ribosomal protein L2</fullName>
    </alternativeName>
</protein>
<proteinExistence type="inferred from homology"/>
<comment type="function">
    <text evidence="1">One of the primary rRNA binding proteins. Required for association of the 30S and 50S subunits to form the 70S ribosome, for tRNA binding and peptide bond formation. It has been suggested to have peptidyltransferase activity; this is somewhat controversial. Makes several contacts with the 16S rRNA in the 70S ribosome.</text>
</comment>
<comment type="subunit">
    <text evidence="1">Part of the 50S ribosomal subunit. Forms a bridge to the 30S subunit in the 70S ribosome.</text>
</comment>
<comment type="similarity">
    <text evidence="1">Belongs to the universal ribosomal protein uL2 family.</text>
</comment>
<evidence type="ECO:0000255" key="1">
    <source>
        <dbReference type="HAMAP-Rule" id="MF_01320"/>
    </source>
</evidence>
<evidence type="ECO:0000256" key="2">
    <source>
        <dbReference type="SAM" id="MobiDB-lite"/>
    </source>
</evidence>
<evidence type="ECO:0000305" key="3"/>
<accession>A5FMZ7</accession>